<protein>
    <recommendedName>
        <fullName evidence="1">Glycine cleavage system H protein</fullName>
    </recommendedName>
</protein>
<accession>Q3APU2</accession>
<organism>
    <name type="scientific">Chlorobium chlorochromatii (strain CaD3)</name>
    <dbReference type="NCBI Taxonomy" id="340177"/>
    <lineage>
        <taxon>Bacteria</taxon>
        <taxon>Pseudomonadati</taxon>
        <taxon>Chlorobiota</taxon>
        <taxon>Chlorobiia</taxon>
        <taxon>Chlorobiales</taxon>
        <taxon>Chlorobiaceae</taxon>
        <taxon>Chlorobium/Pelodictyon group</taxon>
        <taxon>Chlorobium</taxon>
    </lineage>
</organism>
<comment type="function">
    <text evidence="1">The glycine cleavage system catalyzes the degradation of glycine. The H protein shuttles the methylamine group of glycine from the P protein to the T protein.</text>
</comment>
<comment type="cofactor">
    <cofactor evidence="1">
        <name>(R)-lipoate</name>
        <dbReference type="ChEBI" id="CHEBI:83088"/>
    </cofactor>
    <text evidence="1">Binds 1 lipoyl cofactor covalently.</text>
</comment>
<comment type="subunit">
    <text evidence="1">The glycine cleavage system is composed of four proteins: P, T, L and H.</text>
</comment>
<comment type="similarity">
    <text evidence="1">Belongs to the GcvH family.</text>
</comment>
<dbReference type="EMBL" id="CP000108">
    <property type="protein sequence ID" value="ABB28983.1"/>
    <property type="molecule type" value="Genomic_DNA"/>
</dbReference>
<dbReference type="SMR" id="Q3APU2"/>
<dbReference type="STRING" id="340177.Cag_1732"/>
<dbReference type="KEGG" id="cch:Cag_1732"/>
<dbReference type="eggNOG" id="COG0509">
    <property type="taxonomic scope" value="Bacteria"/>
</dbReference>
<dbReference type="HOGENOM" id="CLU_097408_2_2_10"/>
<dbReference type="OrthoDB" id="9796712at2"/>
<dbReference type="GO" id="GO:0005829">
    <property type="term" value="C:cytosol"/>
    <property type="evidence" value="ECO:0007669"/>
    <property type="project" value="TreeGrafter"/>
</dbReference>
<dbReference type="GO" id="GO:0005960">
    <property type="term" value="C:glycine cleavage complex"/>
    <property type="evidence" value="ECO:0007669"/>
    <property type="project" value="InterPro"/>
</dbReference>
<dbReference type="GO" id="GO:0019464">
    <property type="term" value="P:glycine decarboxylation via glycine cleavage system"/>
    <property type="evidence" value="ECO:0007669"/>
    <property type="project" value="UniProtKB-UniRule"/>
</dbReference>
<dbReference type="CDD" id="cd06848">
    <property type="entry name" value="GCS_H"/>
    <property type="match status" value="1"/>
</dbReference>
<dbReference type="Gene3D" id="2.40.50.100">
    <property type="match status" value="1"/>
</dbReference>
<dbReference type="HAMAP" id="MF_00272">
    <property type="entry name" value="GcvH"/>
    <property type="match status" value="1"/>
</dbReference>
<dbReference type="InterPro" id="IPR003016">
    <property type="entry name" value="2-oxoA_DH_lipoyl-BS"/>
</dbReference>
<dbReference type="InterPro" id="IPR000089">
    <property type="entry name" value="Biotin_lipoyl"/>
</dbReference>
<dbReference type="InterPro" id="IPR002930">
    <property type="entry name" value="GCV_H"/>
</dbReference>
<dbReference type="InterPro" id="IPR033753">
    <property type="entry name" value="GCV_H/Fam206"/>
</dbReference>
<dbReference type="InterPro" id="IPR017453">
    <property type="entry name" value="GCV_H_sub"/>
</dbReference>
<dbReference type="InterPro" id="IPR011053">
    <property type="entry name" value="Single_hybrid_motif"/>
</dbReference>
<dbReference type="NCBIfam" id="TIGR00527">
    <property type="entry name" value="gcvH"/>
    <property type="match status" value="1"/>
</dbReference>
<dbReference type="NCBIfam" id="NF002270">
    <property type="entry name" value="PRK01202.1"/>
    <property type="match status" value="1"/>
</dbReference>
<dbReference type="PANTHER" id="PTHR11715">
    <property type="entry name" value="GLYCINE CLEAVAGE SYSTEM H PROTEIN"/>
    <property type="match status" value="1"/>
</dbReference>
<dbReference type="PANTHER" id="PTHR11715:SF3">
    <property type="entry name" value="GLYCINE CLEAVAGE SYSTEM H PROTEIN-RELATED"/>
    <property type="match status" value="1"/>
</dbReference>
<dbReference type="Pfam" id="PF01597">
    <property type="entry name" value="GCV_H"/>
    <property type="match status" value="1"/>
</dbReference>
<dbReference type="SUPFAM" id="SSF51230">
    <property type="entry name" value="Single hybrid motif"/>
    <property type="match status" value="1"/>
</dbReference>
<dbReference type="PROSITE" id="PS50968">
    <property type="entry name" value="BIOTINYL_LIPOYL"/>
    <property type="match status" value="1"/>
</dbReference>
<dbReference type="PROSITE" id="PS00189">
    <property type="entry name" value="LIPOYL"/>
    <property type="match status" value="1"/>
</dbReference>
<proteinExistence type="inferred from homology"/>
<keyword id="KW-0450">Lipoyl</keyword>
<reference key="1">
    <citation type="submission" date="2005-08" db="EMBL/GenBank/DDBJ databases">
        <title>Complete sequence of Chlorobium chlorochromatii CaD3.</title>
        <authorList>
            <consortium name="US DOE Joint Genome Institute"/>
            <person name="Copeland A."/>
            <person name="Lucas S."/>
            <person name="Lapidus A."/>
            <person name="Barry K."/>
            <person name="Detter J.C."/>
            <person name="Glavina T."/>
            <person name="Hammon N."/>
            <person name="Israni S."/>
            <person name="Pitluck S."/>
            <person name="Bryant D."/>
            <person name="Schmutz J."/>
            <person name="Larimer F."/>
            <person name="Land M."/>
            <person name="Kyrpides N."/>
            <person name="Ivanova N."/>
            <person name="Richardson P."/>
        </authorList>
    </citation>
    <scope>NUCLEOTIDE SEQUENCE [LARGE SCALE GENOMIC DNA]</scope>
    <source>
        <strain>CaD3</strain>
    </source>
</reference>
<sequence length="125" mass="13578">MTIPEDLRYTKDHEWMKLLDDGTALVGITDFAQSELGDIVFVELKADGTTLKTHESFGTVEAVKTVADLFAPVAGEIVASNPELASAEVVNQDPYNAWLIKMKVANPAEVEALLDAAAYRQLIGE</sequence>
<name>GCSH_CHLCH</name>
<gene>
    <name evidence="1" type="primary">gcvH</name>
    <name type="ordered locus">Cag_1732</name>
</gene>
<evidence type="ECO:0000255" key="1">
    <source>
        <dbReference type="HAMAP-Rule" id="MF_00272"/>
    </source>
</evidence>
<evidence type="ECO:0000255" key="2">
    <source>
        <dbReference type="PROSITE-ProRule" id="PRU01066"/>
    </source>
</evidence>
<feature type="chain" id="PRO_0000302364" description="Glycine cleavage system H protein">
    <location>
        <begin position="1"/>
        <end position="125"/>
    </location>
</feature>
<feature type="domain" description="Lipoyl-binding" evidence="2">
    <location>
        <begin position="23"/>
        <end position="103"/>
    </location>
</feature>
<feature type="modified residue" description="N6-lipoyllysine" evidence="1">
    <location>
        <position position="64"/>
    </location>
</feature>